<comment type="function">
    <text evidence="1">Together with PhnG, PhnI and PhnL is required for the transfer of the ribose triphosphate moiety from ATP to methyl phosphonate.</text>
</comment>
<comment type="catalytic activity">
    <reaction>
        <text>methylphosphonate + ATP = alpha-D-ribose 1-methylphosphonate 5-triphosphate + adenine</text>
        <dbReference type="Rhea" id="RHEA:34679"/>
        <dbReference type="ChEBI" id="CHEBI:16708"/>
        <dbReference type="ChEBI" id="CHEBI:30616"/>
        <dbReference type="ChEBI" id="CHEBI:68684"/>
        <dbReference type="ChEBI" id="CHEBI:68823"/>
        <dbReference type="EC" id="2.7.8.37"/>
    </reaction>
</comment>
<comment type="similarity">
    <text evidence="2">Belongs to the PhnH family.</text>
</comment>
<dbReference type="EC" id="2.7.8.37"/>
<dbReference type="EMBL" id="M96263">
    <property type="protein sequence ID" value="AAA26351.1"/>
    <property type="molecule type" value="Genomic_DNA"/>
</dbReference>
<dbReference type="EMBL" id="AL591985">
    <property type="protein sequence ID" value="CAC49852.1"/>
    <property type="molecule type" value="Genomic_DNA"/>
</dbReference>
<dbReference type="PIR" id="D96023">
    <property type="entry name" value="D96023"/>
</dbReference>
<dbReference type="RefSeq" id="NP_437992.1">
    <property type="nucleotide sequence ID" value="NC_003078.1"/>
</dbReference>
<dbReference type="RefSeq" id="WP_010976254.1">
    <property type="nucleotide sequence ID" value="NC_003078.1"/>
</dbReference>
<dbReference type="SMR" id="Q52985"/>
<dbReference type="EnsemblBacteria" id="CAC49852">
    <property type="protein sequence ID" value="CAC49852"/>
    <property type="gene ID" value="SM_b20760"/>
</dbReference>
<dbReference type="KEGG" id="sme:SM_b20760"/>
<dbReference type="PATRIC" id="fig|266834.11.peg.6378"/>
<dbReference type="eggNOG" id="COG3625">
    <property type="taxonomic scope" value="Bacteria"/>
</dbReference>
<dbReference type="HOGENOM" id="CLU_115317_1_0_5"/>
<dbReference type="OrthoDB" id="9814509at2"/>
<dbReference type="Proteomes" id="UP000001976">
    <property type="component" value="Plasmid pSymB"/>
</dbReference>
<dbReference type="GO" id="GO:0061693">
    <property type="term" value="F:alpha-D-ribose 1-methylphosphonate 5-triphosphate synthase activity"/>
    <property type="evidence" value="ECO:0007669"/>
    <property type="project" value="UniProtKB-EC"/>
</dbReference>
<dbReference type="GO" id="GO:0019634">
    <property type="term" value="P:organic phosphonate metabolic process"/>
    <property type="evidence" value="ECO:0007669"/>
    <property type="project" value="InterPro"/>
</dbReference>
<dbReference type="Gene3D" id="3.40.50.11310">
    <property type="entry name" value="Bacterial phosphonate metabolism protein PhnH"/>
    <property type="match status" value="1"/>
</dbReference>
<dbReference type="InterPro" id="IPR038058">
    <property type="entry name" value="PhnH-like_sp"/>
</dbReference>
<dbReference type="InterPro" id="IPR008772">
    <property type="entry name" value="Phosphonate_metab_PhnH"/>
</dbReference>
<dbReference type="NCBIfam" id="TIGR03292">
    <property type="entry name" value="PhnH_redo"/>
    <property type="match status" value="1"/>
</dbReference>
<dbReference type="Pfam" id="PF05845">
    <property type="entry name" value="PhnH"/>
    <property type="match status" value="1"/>
</dbReference>
<dbReference type="PIRSF" id="PIRSF020680">
    <property type="entry name" value="PhnH"/>
    <property type="match status" value="1"/>
</dbReference>
<dbReference type="SUPFAM" id="SSF159709">
    <property type="entry name" value="PhnH-like"/>
    <property type="match status" value="1"/>
</dbReference>
<geneLocation type="plasmid">
    <name>pSymB</name>
    <name>megaplasmid 2</name>
</geneLocation>
<protein>
    <recommendedName>
        <fullName>Alpha-D-ribose 1-methylphosphonate 5-triphosphate synthase subunit PhnH</fullName>
        <shortName>RPnTP synthase subunit PhnH</shortName>
        <ecNumber>2.7.8.37</ecNumber>
    </recommendedName>
</protein>
<reference key="1">
    <citation type="submission" date="1992-11" db="EMBL/GenBank/DDBJ databases">
        <title>Characterization of a gene cluster involved in utilization of glyphosate and other phosphonates in Rhizobium meliloti.</title>
        <authorList>
            <person name="McLean P.A."/>
            <person name="Liu C.M."/>
            <person name="Sookdeo C.C."/>
            <person name="Cannon F.C."/>
        </authorList>
    </citation>
    <scope>NUCLEOTIDE SEQUENCE [GENOMIC DNA]</scope>
    <source>
        <strain>1021</strain>
    </source>
</reference>
<reference key="2">
    <citation type="journal article" date="2001" name="Proc. Natl. Acad. Sci. U.S.A.">
        <title>The complete sequence of the 1,683-kb pSymB megaplasmid from the N2-fixing endosymbiont Sinorhizobium meliloti.</title>
        <authorList>
            <person name="Finan T.M."/>
            <person name="Weidner S."/>
            <person name="Wong K."/>
            <person name="Buhrmester J."/>
            <person name="Chain P."/>
            <person name="Vorhoelter F.J."/>
            <person name="Hernandez-Lucas I."/>
            <person name="Becker A."/>
            <person name="Cowie A."/>
            <person name="Gouzy J."/>
            <person name="Golding B."/>
            <person name="Puehler A."/>
        </authorList>
    </citation>
    <scope>NUCLEOTIDE SEQUENCE [LARGE SCALE GENOMIC DNA]</scope>
    <source>
        <strain>1021</strain>
    </source>
</reference>
<reference key="3">
    <citation type="journal article" date="2001" name="Science">
        <title>The composite genome of the legume symbiont Sinorhizobium meliloti.</title>
        <authorList>
            <person name="Galibert F."/>
            <person name="Finan T.M."/>
            <person name="Long S.R."/>
            <person name="Puehler A."/>
            <person name="Abola P."/>
            <person name="Ampe F."/>
            <person name="Barloy-Hubler F."/>
            <person name="Barnett M.J."/>
            <person name="Becker A."/>
            <person name="Boistard P."/>
            <person name="Bothe G."/>
            <person name="Boutry M."/>
            <person name="Bowser L."/>
            <person name="Buhrmester J."/>
            <person name="Cadieu E."/>
            <person name="Capela D."/>
            <person name="Chain P."/>
            <person name="Cowie A."/>
            <person name="Davis R.W."/>
            <person name="Dreano S."/>
            <person name="Federspiel N.A."/>
            <person name="Fisher R.F."/>
            <person name="Gloux S."/>
            <person name="Godrie T."/>
            <person name="Goffeau A."/>
            <person name="Golding B."/>
            <person name="Gouzy J."/>
            <person name="Gurjal M."/>
            <person name="Hernandez-Lucas I."/>
            <person name="Hong A."/>
            <person name="Huizar L."/>
            <person name="Hyman R.W."/>
            <person name="Jones T."/>
            <person name="Kahn D."/>
            <person name="Kahn M.L."/>
            <person name="Kalman S."/>
            <person name="Keating D.H."/>
            <person name="Kiss E."/>
            <person name="Komp C."/>
            <person name="Lelaure V."/>
            <person name="Masuy D."/>
            <person name="Palm C."/>
            <person name="Peck M.C."/>
            <person name="Pohl T.M."/>
            <person name="Portetelle D."/>
            <person name="Purnelle B."/>
            <person name="Ramsperger U."/>
            <person name="Surzycki R."/>
            <person name="Thebault P."/>
            <person name="Vandenbol M."/>
            <person name="Vorhoelter F.J."/>
            <person name="Weidner S."/>
            <person name="Wells D.H."/>
            <person name="Wong K."/>
            <person name="Yeh K.-C."/>
            <person name="Batut J."/>
        </authorList>
    </citation>
    <scope>NUCLEOTIDE SEQUENCE [LARGE SCALE GENOMIC DNA]</scope>
    <source>
        <strain>1021</strain>
    </source>
</reference>
<gene>
    <name type="primary">phnH</name>
    <name type="ordered locus">RB1452</name>
    <name type="ORF">SMb20760</name>
</gene>
<proteinExistence type="inferred from homology"/>
<accession>Q52985</accession>
<name>PHNH_RHIME</name>
<feature type="chain" id="PRO_0000058394" description="Alpha-D-ribose 1-methylphosphonate 5-triphosphate synthase subunit PhnH">
    <location>
        <begin position="1"/>
        <end position="200"/>
    </location>
</feature>
<organism>
    <name type="scientific">Rhizobium meliloti (strain 1021)</name>
    <name type="common">Ensifer meliloti</name>
    <name type="synonym">Sinorhizobium meliloti</name>
    <dbReference type="NCBI Taxonomy" id="266834"/>
    <lineage>
        <taxon>Bacteria</taxon>
        <taxon>Pseudomonadati</taxon>
        <taxon>Pseudomonadota</taxon>
        <taxon>Alphaproteobacteria</taxon>
        <taxon>Hyphomicrobiales</taxon>
        <taxon>Rhizobiaceae</taxon>
        <taxon>Sinorhizobium/Ensifer group</taxon>
        <taxon>Sinorhizobium</taxon>
    </lineage>
</organism>
<evidence type="ECO:0000250" key="1"/>
<evidence type="ECO:0000305" key="2"/>
<sequence>MTAQSQIYSGAFADPVFEAQSVFRSLMDCFARPGIIGRLSTAAAPPAPLGEASGAVALTLCDHDTPVWLSPALSKSSAPKWIAFHTGAGVTDTKDEPRFAFFEKGAAVPGFDQFALGTQEYPDRSTTLVVEVEALEGGQPLIGRGPGIKNGIVIAPKGLPDVFLDLWAANRAIFPRGIDLVLTAREAVLCLPRTTKLERE</sequence>
<keyword id="KW-0614">Plasmid</keyword>
<keyword id="KW-1185">Reference proteome</keyword>
<keyword id="KW-0808">Transferase</keyword>